<gene>
    <name type="primary">fabD</name>
    <name type="synonym">ylpE</name>
    <name type="ordered locus">BSU15900</name>
</gene>
<comment type="catalytic activity">
    <reaction>
        <text>holo-[ACP] + malonyl-CoA = malonyl-[ACP] + CoA</text>
        <dbReference type="Rhea" id="RHEA:41792"/>
        <dbReference type="Rhea" id="RHEA-COMP:9623"/>
        <dbReference type="Rhea" id="RHEA-COMP:9685"/>
        <dbReference type="ChEBI" id="CHEBI:57287"/>
        <dbReference type="ChEBI" id="CHEBI:57384"/>
        <dbReference type="ChEBI" id="CHEBI:64479"/>
        <dbReference type="ChEBI" id="CHEBI:78449"/>
        <dbReference type="EC" id="2.3.1.39"/>
    </reaction>
</comment>
<comment type="pathway">
    <text>Lipid metabolism; fatty acid biosynthesis.</text>
</comment>
<comment type="similarity">
    <text evidence="2">Belongs to the FabD family.</text>
</comment>
<proteinExistence type="inferred from homology"/>
<evidence type="ECO:0000250" key="1"/>
<evidence type="ECO:0000305" key="2"/>
<sequence>MSKIAFLFPGQGSQFIGMGKELYEQVPAAKRLFDEADETLETKLSSLIFEGDAEELTLTYNAQPALLTTSIAVLEKFKESGITPDFTAGHSLGEYSALVAAGALSFKDAVYTVRKRGEFMNEAVPAGEGAMAAILGMDAEALKQVTDKVTEEGNLVQLANLNCPGQIVISGTAKGVELASELAKENGAKRAIPLEVSGPFHSELMKPAAEKLKEVLDACDIKDADVPVISNVSADVMTEKADIKEKLIEQLYSPVRFEESINKLIAEGVTTFIEIGPGKVLSGLVKKVNRRLKTIAVSDPETIELAIQTLKEENDNA</sequence>
<organism>
    <name type="scientific">Bacillus subtilis (strain 168)</name>
    <dbReference type="NCBI Taxonomy" id="224308"/>
    <lineage>
        <taxon>Bacteria</taxon>
        <taxon>Bacillati</taxon>
        <taxon>Bacillota</taxon>
        <taxon>Bacilli</taxon>
        <taxon>Bacillales</taxon>
        <taxon>Bacillaceae</taxon>
        <taxon>Bacillus</taxon>
    </lineage>
</organism>
<reference key="1">
    <citation type="journal article" date="1996" name="J. Bacteriol.">
        <title>Bacillus subtilis acyl carrier protein is encoded in a cluster of lipid biosynthesis genes.</title>
        <authorList>
            <person name="Morbidoni H.R."/>
            <person name="de Mendoza D."/>
            <person name="Cronan J.E. Jr."/>
        </authorList>
    </citation>
    <scope>NUCLEOTIDE SEQUENCE [GENOMIC DNA]</scope>
    <source>
        <strain>168</strain>
    </source>
</reference>
<reference key="2">
    <citation type="journal article" date="1998" name="Microbiology">
        <title>A 28 kbp segment from the spoVM region of the Bacillus subtilis 168 genome.</title>
        <authorList>
            <person name="Foulger D."/>
            <person name="Errington J."/>
        </authorList>
    </citation>
    <scope>NUCLEOTIDE SEQUENCE [GENOMIC DNA]</scope>
    <source>
        <strain>168</strain>
    </source>
</reference>
<reference key="3">
    <citation type="journal article" date="1997" name="Nature">
        <title>The complete genome sequence of the Gram-positive bacterium Bacillus subtilis.</title>
        <authorList>
            <person name="Kunst F."/>
            <person name="Ogasawara N."/>
            <person name="Moszer I."/>
            <person name="Albertini A.M."/>
            <person name="Alloni G."/>
            <person name="Azevedo V."/>
            <person name="Bertero M.G."/>
            <person name="Bessieres P."/>
            <person name="Bolotin A."/>
            <person name="Borchert S."/>
            <person name="Borriss R."/>
            <person name="Boursier L."/>
            <person name="Brans A."/>
            <person name="Braun M."/>
            <person name="Brignell S.C."/>
            <person name="Bron S."/>
            <person name="Brouillet S."/>
            <person name="Bruschi C.V."/>
            <person name="Caldwell B."/>
            <person name="Capuano V."/>
            <person name="Carter N.M."/>
            <person name="Choi S.-K."/>
            <person name="Codani J.-J."/>
            <person name="Connerton I.F."/>
            <person name="Cummings N.J."/>
            <person name="Daniel R.A."/>
            <person name="Denizot F."/>
            <person name="Devine K.M."/>
            <person name="Duesterhoeft A."/>
            <person name="Ehrlich S.D."/>
            <person name="Emmerson P.T."/>
            <person name="Entian K.-D."/>
            <person name="Errington J."/>
            <person name="Fabret C."/>
            <person name="Ferrari E."/>
            <person name="Foulger D."/>
            <person name="Fritz C."/>
            <person name="Fujita M."/>
            <person name="Fujita Y."/>
            <person name="Fuma S."/>
            <person name="Galizzi A."/>
            <person name="Galleron N."/>
            <person name="Ghim S.-Y."/>
            <person name="Glaser P."/>
            <person name="Goffeau A."/>
            <person name="Golightly E.J."/>
            <person name="Grandi G."/>
            <person name="Guiseppi G."/>
            <person name="Guy B.J."/>
            <person name="Haga K."/>
            <person name="Haiech J."/>
            <person name="Harwood C.R."/>
            <person name="Henaut A."/>
            <person name="Hilbert H."/>
            <person name="Holsappel S."/>
            <person name="Hosono S."/>
            <person name="Hullo M.-F."/>
            <person name="Itaya M."/>
            <person name="Jones L.-M."/>
            <person name="Joris B."/>
            <person name="Karamata D."/>
            <person name="Kasahara Y."/>
            <person name="Klaerr-Blanchard M."/>
            <person name="Klein C."/>
            <person name="Kobayashi Y."/>
            <person name="Koetter P."/>
            <person name="Koningstein G."/>
            <person name="Krogh S."/>
            <person name="Kumano M."/>
            <person name="Kurita K."/>
            <person name="Lapidus A."/>
            <person name="Lardinois S."/>
            <person name="Lauber J."/>
            <person name="Lazarevic V."/>
            <person name="Lee S.-M."/>
            <person name="Levine A."/>
            <person name="Liu H."/>
            <person name="Masuda S."/>
            <person name="Mauel C."/>
            <person name="Medigue C."/>
            <person name="Medina N."/>
            <person name="Mellado R.P."/>
            <person name="Mizuno M."/>
            <person name="Moestl D."/>
            <person name="Nakai S."/>
            <person name="Noback M."/>
            <person name="Noone D."/>
            <person name="O'Reilly M."/>
            <person name="Ogawa K."/>
            <person name="Ogiwara A."/>
            <person name="Oudega B."/>
            <person name="Park S.-H."/>
            <person name="Parro V."/>
            <person name="Pohl T.M."/>
            <person name="Portetelle D."/>
            <person name="Porwollik S."/>
            <person name="Prescott A.M."/>
            <person name="Presecan E."/>
            <person name="Pujic P."/>
            <person name="Purnelle B."/>
            <person name="Rapoport G."/>
            <person name="Rey M."/>
            <person name="Reynolds S."/>
            <person name="Rieger M."/>
            <person name="Rivolta C."/>
            <person name="Rocha E."/>
            <person name="Roche B."/>
            <person name="Rose M."/>
            <person name="Sadaie Y."/>
            <person name="Sato T."/>
            <person name="Scanlan E."/>
            <person name="Schleich S."/>
            <person name="Schroeter R."/>
            <person name="Scoffone F."/>
            <person name="Sekiguchi J."/>
            <person name="Sekowska A."/>
            <person name="Seror S.J."/>
            <person name="Serror P."/>
            <person name="Shin B.-S."/>
            <person name="Soldo B."/>
            <person name="Sorokin A."/>
            <person name="Tacconi E."/>
            <person name="Takagi T."/>
            <person name="Takahashi H."/>
            <person name="Takemaru K."/>
            <person name="Takeuchi M."/>
            <person name="Tamakoshi A."/>
            <person name="Tanaka T."/>
            <person name="Terpstra P."/>
            <person name="Tognoni A."/>
            <person name="Tosato V."/>
            <person name="Uchiyama S."/>
            <person name="Vandenbol M."/>
            <person name="Vannier F."/>
            <person name="Vassarotti A."/>
            <person name="Viari A."/>
            <person name="Wambutt R."/>
            <person name="Wedler E."/>
            <person name="Wedler H."/>
            <person name="Weitzenegger T."/>
            <person name="Winters P."/>
            <person name="Wipat A."/>
            <person name="Yamamoto H."/>
            <person name="Yamane K."/>
            <person name="Yasumoto K."/>
            <person name="Yata K."/>
            <person name="Yoshida K."/>
            <person name="Yoshikawa H.-F."/>
            <person name="Zumstein E."/>
            <person name="Yoshikawa H."/>
            <person name="Danchin A."/>
        </authorList>
    </citation>
    <scope>NUCLEOTIDE SEQUENCE [LARGE SCALE GENOMIC DNA]</scope>
    <source>
        <strain>168</strain>
    </source>
</reference>
<protein>
    <recommendedName>
        <fullName>Malonyl CoA-acyl carrier protein transacylase</fullName>
        <shortName>MCT</shortName>
        <ecNumber>2.3.1.39</ecNumber>
    </recommendedName>
</protein>
<accession>P71019</accession>
<accession>O34463</accession>
<name>FABD_BACSU</name>
<dbReference type="EC" id="2.3.1.39"/>
<dbReference type="EMBL" id="U59433">
    <property type="protein sequence ID" value="AAC44306.1"/>
    <property type="molecule type" value="Genomic_DNA"/>
</dbReference>
<dbReference type="EMBL" id="Y13937">
    <property type="protein sequence ID" value="CAA74249.1"/>
    <property type="molecule type" value="Genomic_DNA"/>
</dbReference>
<dbReference type="EMBL" id="AL009126">
    <property type="protein sequence ID" value="CAB13463.1"/>
    <property type="molecule type" value="Genomic_DNA"/>
</dbReference>
<dbReference type="PIR" id="H69620">
    <property type="entry name" value="H69620"/>
</dbReference>
<dbReference type="RefSeq" id="NP_389472.1">
    <property type="nucleotide sequence ID" value="NC_000964.3"/>
</dbReference>
<dbReference type="RefSeq" id="WP_003245314.1">
    <property type="nucleotide sequence ID" value="NZ_OZ025638.1"/>
</dbReference>
<dbReference type="SMR" id="P71019"/>
<dbReference type="FunCoup" id="P71019">
    <property type="interactions" value="678"/>
</dbReference>
<dbReference type="IntAct" id="P71019">
    <property type="interactions" value="1"/>
</dbReference>
<dbReference type="MINT" id="P71019"/>
<dbReference type="STRING" id="224308.BSU15900"/>
<dbReference type="jPOST" id="P71019"/>
<dbReference type="PaxDb" id="224308-BSU15900"/>
<dbReference type="EnsemblBacteria" id="CAB13463">
    <property type="protein sequence ID" value="CAB13463"/>
    <property type="gene ID" value="BSU_15900"/>
</dbReference>
<dbReference type="GeneID" id="938488"/>
<dbReference type="KEGG" id="bsu:BSU15900"/>
<dbReference type="PATRIC" id="fig|224308.179.peg.1730"/>
<dbReference type="eggNOG" id="COG0331">
    <property type="taxonomic scope" value="Bacteria"/>
</dbReference>
<dbReference type="InParanoid" id="P71019"/>
<dbReference type="OrthoDB" id="9805460at2"/>
<dbReference type="PhylomeDB" id="P71019"/>
<dbReference type="BioCyc" id="BSUB:BSU15900-MONOMER"/>
<dbReference type="UniPathway" id="UPA00094"/>
<dbReference type="Proteomes" id="UP000001570">
    <property type="component" value="Chromosome"/>
</dbReference>
<dbReference type="GO" id="GO:0005829">
    <property type="term" value="C:cytosol"/>
    <property type="evidence" value="ECO:0000318"/>
    <property type="project" value="GO_Central"/>
</dbReference>
<dbReference type="GO" id="GO:0004314">
    <property type="term" value="F:[acyl-carrier-protein] S-malonyltransferase activity"/>
    <property type="evidence" value="ECO:0000318"/>
    <property type="project" value="GO_Central"/>
</dbReference>
<dbReference type="GO" id="GO:0006633">
    <property type="term" value="P:fatty acid biosynthetic process"/>
    <property type="evidence" value="ECO:0000318"/>
    <property type="project" value="GO_Central"/>
</dbReference>
<dbReference type="FunFam" id="3.30.70.250:FF:000001">
    <property type="entry name" value="Malonyl CoA-acyl carrier protein transacylase"/>
    <property type="match status" value="1"/>
</dbReference>
<dbReference type="Gene3D" id="3.30.70.250">
    <property type="entry name" value="Malonyl-CoA ACP transacylase, ACP-binding"/>
    <property type="match status" value="1"/>
</dbReference>
<dbReference type="Gene3D" id="3.40.366.10">
    <property type="entry name" value="Malonyl-Coenzyme A Acyl Carrier Protein, domain 2"/>
    <property type="match status" value="1"/>
</dbReference>
<dbReference type="InterPro" id="IPR001227">
    <property type="entry name" value="Ac_transferase_dom_sf"/>
</dbReference>
<dbReference type="InterPro" id="IPR014043">
    <property type="entry name" value="Acyl_transferase_dom"/>
</dbReference>
<dbReference type="InterPro" id="IPR016035">
    <property type="entry name" value="Acyl_Trfase/lysoPLipase"/>
</dbReference>
<dbReference type="InterPro" id="IPR050858">
    <property type="entry name" value="Mal-CoA-ACP_Trans/PKS_FabD"/>
</dbReference>
<dbReference type="InterPro" id="IPR024925">
    <property type="entry name" value="Malonyl_CoA-ACP_transAc"/>
</dbReference>
<dbReference type="InterPro" id="IPR004410">
    <property type="entry name" value="Malonyl_CoA-ACP_transAc_FabD"/>
</dbReference>
<dbReference type="InterPro" id="IPR016036">
    <property type="entry name" value="Malonyl_transacylase_ACP-bd"/>
</dbReference>
<dbReference type="NCBIfam" id="TIGR00128">
    <property type="entry name" value="fabD"/>
    <property type="match status" value="1"/>
</dbReference>
<dbReference type="PANTHER" id="PTHR42681">
    <property type="entry name" value="MALONYL-COA-ACYL CARRIER PROTEIN TRANSACYLASE, MITOCHONDRIAL"/>
    <property type="match status" value="1"/>
</dbReference>
<dbReference type="PANTHER" id="PTHR42681:SF1">
    <property type="entry name" value="MALONYL-COA-ACYL CARRIER PROTEIN TRANSACYLASE, MITOCHONDRIAL"/>
    <property type="match status" value="1"/>
</dbReference>
<dbReference type="Pfam" id="PF00698">
    <property type="entry name" value="Acyl_transf_1"/>
    <property type="match status" value="1"/>
</dbReference>
<dbReference type="PIRSF" id="PIRSF000446">
    <property type="entry name" value="Mct"/>
    <property type="match status" value="1"/>
</dbReference>
<dbReference type="SMART" id="SM00827">
    <property type="entry name" value="PKS_AT"/>
    <property type="match status" value="1"/>
</dbReference>
<dbReference type="SUPFAM" id="SSF52151">
    <property type="entry name" value="FabD/lysophospholipase-like"/>
    <property type="match status" value="1"/>
</dbReference>
<dbReference type="SUPFAM" id="SSF55048">
    <property type="entry name" value="Probable ACP-binding domain of malonyl-CoA ACP transacylase"/>
    <property type="match status" value="1"/>
</dbReference>
<feature type="chain" id="PRO_0000194210" description="Malonyl CoA-acyl carrier protein transacylase">
    <location>
        <begin position="1"/>
        <end position="317"/>
    </location>
</feature>
<feature type="active site" evidence="1">
    <location>
        <position position="91"/>
    </location>
</feature>
<feature type="active site" evidence="1">
    <location>
        <position position="201"/>
    </location>
</feature>
<feature type="sequence conflict" description="In Ref. 1." evidence="2" ref="1">
    <original>VPAGEGAM</original>
    <variation>GCRLAKEQW</variation>
    <location>
        <begin position="124"/>
        <end position="131"/>
    </location>
</feature>
<keyword id="KW-0012">Acyltransferase</keyword>
<keyword id="KW-0275">Fatty acid biosynthesis</keyword>
<keyword id="KW-0276">Fatty acid metabolism</keyword>
<keyword id="KW-0444">Lipid biosynthesis</keyword>
<keyword id="KW-0443">Lipid metabolism</keyword>
<keyword id="KW-1185">Reference proteome</keyword>
<keyword id="KW-0808">Transferase</keyword>